<name>PAN1_CANAL</name>
<protein>
    <recommendedName>
        <fullName>Actin cytoskeleton-regulatory complex protein PAN1</fullName>
    </recommendedName>
</protein>
<accession>Q5AHB1</accession>
<accession>A0A1D8PGW1</accession>
<reference key="1">
    <citation type="journal article" date="2004" name="Proc. Natl. Acad. Sci. U.S.A.">
        <title>The diploid genome sequence of Candida albicans.</title>
        <authorList>
            <person name="Jones T."/>
            <person name="Federspiel N.A."/>
            <person name="Chibana H."/>
            <person name="Dungan J."/>
            <person name="Kalman S."/>
            <person name="Magee B.B."/>
            <person name="Newport G."/>
            <person name="Thorstenson Y.R."/>
            <person name="Agabian N."/>
            <person name="Magee P.T."/>
            <person name="Davis R.W."/>
            <person name="Scherer S."/>
        </authorList>
    </citation>
    <scope>NUCLEOTIDE SEQUENCE [LARGE SCALE GENOMIC DNA]</scope>
    <source>
        <strain>SC5314 / ATCC MYA-2876</strain>
    </source>
</reference>
<reference key="2">
    <citation type="journal article" date="2007" name="Genome Biol.">
        <title>Assembly of the Candida albicans genome into sixteen supercontigs aligned on the eight chromosomes.</title>
        <authorList>
            <person name="van het Hoog M."/>
            <person name="Rast T.J."/>
            <person name="Martchenko M."/>
            <person name="Grindle S."/>
            <person name="Dignard D."/>
            <person name="Hogues H."/>
            <person name="Cuomo C."/>
            <person name="Berriman M."/>
            <person name="Scherer S."/>
            <person name="Magee B.B."/>
            <person name="Whiteway M."/>
            <person name="Chibana H."/>
            <person name="Nantel A."/>
            <person name="Magee P.T."/>
        </authorList>
    </citation>
    <scope>GENOME REANNOTATION</scope>
    <source>
        <strain>SC5314 / ATCC MYA-2876</strain>
    </source>
</reference>
<reference key="3">
    <citation type="journal article" date="2013" name="Genome Biol.">
        <title>Assembly of a phased diploid Candida albicans genome facilitates allele-specific measurements and provides a simple model for repeat and indel structure.</title>
        <authorList>
            <person name="Muzzey D."/>
            <person name="Schwartz K."/>
            <person name="Weissman J.S."/>
            <person name="Sherlock G."/>
        </authorList>
    </citation>
    <scope>NUCLEOTIDE SEQUENCE [LARGE SCALE GENOMIC DNA]</scope>
    <scope>GENOME REANNOTATION</scope>
    <source>
        <strain>SC5314 / ATCC MYA-2876</strain>
    </source>
</reference>
<reference key="4">
    <citation type="journal article" date="2007" name="Yeast">
        <title>Functional analysis of Candida albicans genes whose Saccharomyces cerevisiae homologues are involved in endocytosis.</title>
        <authorList>
            <person name="Martin R."/>
            <person name="Hellwig D."/>
            <person name="Schaub Y."/>
            <person name="Bauer J."/>
            <person name="Walther A."/>
            <person name="Wendland J."/>
        </authorList>
    </citation>
    <scope>FUNCTION</scope>
    <scope>SUBCELLULAR LOCATION</scope>
</reference>
<comment type="function">
    <text evidence="1 7">Component of the PAN1 actin cytoskeleton-regulatory complex required for the internalization of endosomes during actin-coupled endocytosis. The complex links the site of endocytosis to the cell membrane-associated actin cytoskeleton. Mediates uptake of external molecules and vacuolar degradation of plasma membrane proteins. Plays a role in the proper organization of the cell membrane-associated actin cytoskeleton and promotes its destabilization (By similarity).</text>
</comment>
<comment type="subunit">
    <text evidence="1">Component of the PAN1 actin cytoskeleton-regulatory complex.</text>
</comment>
<comment type="subcellular location">
    <subcellularLocation>
        <location evidence="1">Cell membrane</location>
        <topology evidence="1">Peripheral membrane protein</topology>
        <orientation evidence="1">Cytoplasmic side</orientation>
    </subcellularLocation>
    <subcellularLocation>
        <location evidence="7">Endosome membrane</location>
        <topology evidence="7">Peripheral membrane protein</topology>
        <orientation evidence="7">Cytoplasmic side</orientation>
    </subcellularLocation>
    <subcellularLocation>
        <location evidence="7">Cytoplasm</location>
        <location evidence="7">Cytoskeleton</location>
        <location evidence="7">Actin patch</location>
    </subcellularLocation>
    <text>Localizes at sites of polarized growth like the hyphal tip.</text>
</comment>
<comment type="similarity">
    <text evidence="8">Belongs to the PAN1 family.</text>
</comment>
<gene>
    <name type="primary">PAN1</name>
    <name type="ordered locus">CAALFM_C203380WA</name>
    <name type="ORF">CaO19.8505</name>
    <name type="ORF">CaO19.886</name>
</gene>
<keyword id="KW-0009">Actin-binding</keyword>
<keyword id="KW-1003">Cell membrane</keyword>
<keyword id="KW-0175">Coiled coil</keyword>
<keyword id="KW-0963">Cytoplasm</keyword>
<keyword id="KW-0206">Cytoskeleton</keyword>
<keyword id="KW-0254">Endocytosis</keyword>
<keyword id="KW-0967">Endosome</keyword>
<keyword id="KW-0472">Membrane</keyword>
<keyword id="KW-1185">Reference proteome</keyword>
<keyword id="KW-0677">Repeat</keyword>
<proteinExistence type="inferred from homology"/>
<sequence length="1396" mass="152369">MYNPYQQQQQGMGYNPQQQTGYGYNNYQMPQQPQFNQQPMYPQATGFVPQQPNLYGSNFQTSGGSGMAPQQTGFSQQQTMQPQQTGYIQTQPTGFGGTAPIVTENSELKIPSIRLSFISAEDQKKFEHLFRTAVPKGEQSISGDSASGILLRSGLSAVTLAEIWNLSDIDKTGSLLFPEFALSLHLCSMAKRGEPLPGILPEKWLNEVRSFVDQINFTVPDDPSKILANTPFANFAPKKESDWLAPQSTGYLQNQSAPPMTSFQPQVTGFGGQGLVSQATGGVPMPSTTFGNAAGLTAQRTGGGTLIPLQPQQTAGLIPAQKTGPLNPQTTGFNQQSLQQQRTGGLPQQLTGYQGPPQGQGQQLQQQRTGGFPQVQSQPTGGFVPQTSFQQPQLVSQRTGPMQAQPTGSLQAQPTGRPGEWGFVSMPTGGIPGLNAMQQHFLPNNQLPTSNLHSAMDNKLKENVTWAITKQEKQIYDGLFQAWDNQKKGYVDSNVALNVFTKSGLSRSDLESIWTLVDTDDTGKLNKNQFAVAMHLIYRRLNGYDIPLRLPPELIPPADRTLKDTMDSLKNSLKGGVNNKPTKPPKPQSKPDGTRFKNDDNNFGYVSNVRHRRKSTSDESHKSSVKSSSDYDLSIEDMKKLIHEKRILLDALDTEDQANNYSRSSSSMHEKQIIENLKKEIMAVQTKLDERGNDGPSSDERNKLLATLDHLTRDVVPRLISDIHKVNQEISRKKAEVFKLELLKKNPSWNPEDDESQIQGTGPNGEVTDYDRIKYQSRQKLKQRMAALTGKSTGGNSDLDLELKQATEKAQDEASRQSEMIQDIAAGIKTMEDECAAKLSSSVTEDVGHEKWEQGKGISSEVAKFVKELEAFSKEQRRNIAKSQKQEQTREPLAKQQTNASLVSDSGAAKSAYATPEERAAYIKQQAEKRMNERLAKLGITRKSKSTEQKPPVESKSVSNHSPVPDSEVKSVTRNANEVEVQKPKPDSQPVSKNREPAEQPNSKADTNSVGSQNVVSNTNDDTSGDDDDEEYKAILKQKQEMEARERERKLRKQKAKEERLAKIKKEMEEMKKREMEESQDEEEEEAKQVTSVHVSRAQSSNANSNVIPQQETATENVNTVSQPTSTDTAKQSYHPHESNPFSKMNNNTSQNSTVTNTGTNPFFKSTSQETKIDPHKAEAQRASQRGVASSGGWSDSEEEESEEESPNRAGAAKLASLLFGGMPQPPTTSSSSLNNDAEKVSEQEHENAKQVASTPLSNDDNGKTDSGPSGFAGENESSFSQAPPIPVDAPPAPNSIPPPPPPPPQFSNEAPPVPDSIPPPPPPPSVPSTVPALPDSMPPPPPPPPPPAAPNNTSSSQQASGAPNIGALLGQITGGASLRKVETKVSSGATVGRVL</sequence>
<organism>
    <name type="scientific">Candida albicans (strain SC5314 / ATCC MYA-2876)</name>
    <name type="common">Yeast</name>
    <dbReference type="NCBI Taxonomy" id="237561"/>
    <lineage>
        <taxon>Eukaryota</taxon>
        <taxon>Fungi</taxon>
        <taxon>Dikarya</taxon>
        <taxon>Ascomycota</taxon>
        <taxon>Saccharomycotina</taxon>
        <taxon>Pichiomycetes</taxon>
        <taxon>Debaryomycetaceae</taxon>
        <taxon>Candida/Lodderomyces clade</taxon>
        <taxon>Candida</taxon>
    </lineage>
</organism>
<evidence type="ECO:0000250" key="1"/>
<evidence type="ECO:0000255" key="2"/>
<evidence type="ECO:0000255" key="3">
    <source>
        <dbReference type="PROSITE-ProRule" id="PRU00077"/>
    </source>
</evidence>
<evidence type="ECO:0000255" key="4">
    <source>
        <dbReference type="PROSITE-ProRule" id="PRU00406"/>
    </source>
</evidence>
<evidence type="ECO:0000255" key="5">
    <source>
        <dbReference type="PROSITE-ProRule" id="PRU00448"/>
    </source>
</evidence>
<evidence type="ECO:0000256" key="6">
    <source>
        <dbReference type="SAM" id="MobiDB-lite"/>
    </source>
</evidence>
<evidence type="ECO:0000269" key="7">
    <source>
    </source>
</evidence>
<evidence type="ECO:0000305" key="8"/>
<feature type="chain" id="PRO_0000349471" description="Actin cytoskeleton-regulatory complex protein PAN1">
    <location>
        <begin position="1"/>
        <end position="1396"/>
    </location>
</feature>
<feature type="domain" description="EH 1" evidence="3">
    <location>
        <begin position="122"/>
        <end position="211"/>
    </location>
</feature>
<feature type="domain" description="EF-hand 1" evidence="5">
    <location>
        <begin position="155"/>
        <end position="190"/>
    </location>
</feature>
<feature type="domain" description="EH 2" evidence="3">
    <location>
        <begin position="472"/>
        <end position="561"/>
    </location>
</feature>
<feature type="domain" description="EF-hand 2" evidence="5">
    <location>
        <begin position="505"/>
        <end position="540"/>
    </location>
</feature>
<feature type="domain" description="WH2" evidence="4">
    <location>
        <begin position="1365"/>
        <end position="1382"/>
    </location>
</feature>
<feature type="region of interest" description="Disordered" evidence="6">
    <location>
        <begin position="1"/>
        <end position="20"/>
    </location>
</feature>
<feature type="region of interest" description="Disordered" evidence="6">
    <location>
        <begin position="249"/>
        <end position="269"/>
    </location>
</feature>
<feature type="region of interest" description="Disordered" evidence="6">
    <location>
        <begin position="318"/>
        <end position="383"/>
    </location>
</feature>
<feature type="region of interest" description="Disordered" evidence="6">
    <location>
        <begin position="569"/>
        <end position="630"/>
    </location>
</feature>
<feature type="region of interest" description="Disordered" evidence="6">
    <location>
        <begin position="746"/>
        <end position="771"/>
    </location>
</feature>
<feature type="region of interest" description="Disordered" evidence="6">
    <location>
        <begin position="877"/>
        <end position="916"/>
    </location>
</feature>
<feature type="region of interest" description="Disordered" evidence="6">
    <location>
        <begin position="933"/>
        <end position="1369"/>
    </location>
</feature>
<feature type="region of interest" description="Disordered" evidence="6">
    <location>
        <begin position="1377"/>
        <end position="1396"/>
    </location>
</feature>
<feature type="coiled-coil region" evidence="2">
    <location>
        <begin position="1037"/>
        <end position="1093"/>
    </location>
</feature>
<feature type="compositionally biased region" description="Polar residues" evidence="6">
    <location>
        <begin position="249"/>
        <end position="267"/>
    </location>
</feature>
<feature type="compositionally biased region" description="Polar residues" evidence="6">
    <location>
        <begin position="324"/>
        <end position="342"/>
    </location>
</feature>
<feature type="compositionally biased region" description="Low complexity" evidence="6">
    <location>
        <begin position="343"/>
        <end position="371"/>
    </location>
</feature>
<feature type="compositionally biased region" description="Polar residues" evidence="6">
    <location>
        <begin position="374"/>
        <end position="383"/>
    </location>
</feature>
<feature type="compositionally biased region" description="Basic and acidic residues" evidence="6">
    <location>
        <begin position="877"/>
        <end position="893"/>
    </location>
</feature>
<feature type="compositionally biased region" description="Polar residues" evidence="6">
    <location>
        <begin position="895"/>
        <end position="904"/>
    </location>
</feature>
<feature type="compositionally biased region" description="Polar residues" evidence="6">
    <location>
        <begin position="1000"/>
        <end position="1016"/>
    </location>
</feature>
<feature type="compositionally biased region" description="Basic and acidic residues" evidence="6">
    <location>
        <begin position="1032"/>
        <end position="1049"/>
    </location>
</feature>
<feature type="compositionally biased region" description="Basic and acidic residues" evidence="6">
    <location>
        <begin position="1056"/>
        <end position="1077"/>
    </location>
</feature>
<feature type="compositionally biased region" description="Polar residues" evidence="6">
    <location>
        <begin position="1089"/>
        <end position="1132"/>
    </location>
</feature>
<feature type="compositionally biased region" description="Low complexity" evidence="6">
    <location>
        <begin position="1146"/>
        <end position="1161"/>
    </location>
</feature>
<feature type="compositionally biased region" description="Basic and acidic residues" evidence="6">
    <location>
        <begin position="1171"/>
        <end position="1180"/>
    </location>
</feature>
<feature type="compositionally biased region" description="Acidic residues" evidence="6">
    <location>
        <begin position="1196"/>
        <end position="1205"/>
    </location>
</feature>
<feature type="compositionally biased region" description="Basic and acidic residues" evidence="6">
    <location>
        <begin position="1237"/>
        <end position="1249"/>
    </location>
</feature>
<feature type="compositionally biased region" description="Polar residues" evidence="6">
    <location>
        <begin position="1251"/>
        <end position="1268"/>
    </location>
</feature>
<feature type="compositionally biased region" description="Pro residues" evidence="6">
    <location>
        <begin position="1284"/>
        <end position="1327"/>
    </location>
</feature>
<feature type="compositionally biased region" description="Pro residues" evidence="6">
    <location>
        <begin position="1337"/>
        <end position="1350"/>
    </location>
</feature>
<feature type="compositionally biased region" description="Polar residues" evidence="6">
    <location>
        <begin position="1352"/>
        <end position="1362"/>
    </location>
</feature>
<dbReference type="EMBL" id="CP017624">
    <property type="protein sequence ID" value="AOW27374.1"/>
    <property type="molecule type" value="Genomic_DNA"/>
</dbReference>
<dbReference type="RefSeq" id="XP_721009.2">
    <property type="nucleotide sequence ID" value="XM_715916.2"/>
</dbReference>
<dbReference type="SMR" id="Q5AHB1"/>
<dbReference type="BioGRID" id="1220357">
    <property type="interactions" value="1"/>
</dbReference>
<dbReference type="FunCoup" id="Q5AHB1">
    <property type="interactions" value="77"/>
</dbReference>
<dbReference type="STRING" id="237561.Q5AHB1"/>
<dbReference type="EnsemblFungi" id="C2_03380W_A-T">
    <property type="protein sequence ID" value="C2_03380W_A-T-p1"/>
    <property type="gene ID" value="C2_03380W_A"/>
</dbReference>
<dbReference type="GeneID" id="3637386"/>
<dbReference type="KEGG" id="cal:CAALFM_C203380WA"/>
<dbReference type="CGD" id="CAL0000184200">
    <property type="gene designation" value="PAN1"/>
</dbReference>
<dbReference type="VEuPathDB" id="FungiDB:C2_03380W_A"/>
<dbReference type="eggNOG" id="KOG0998">
    <property type="taxonomic scope" value="Eukaryota"/>
</dbReference>
<dbReference type="eggNOG" id="KOG1029">
    <property type="taxonomic scope" value="Eukaryota"/>
</dbReference>
<dbReference type="eggNOG" id="KOG2056">
    <property type="taxonomic scope" value="Eukaryota"/>
</dbReference>
<dbReference type="HOGENOM" id="CLU_001619_0_0_1"/>
<dbReference type="InParanoid" id="Q5AHB1"/>
<dbReference type="OrthoDB" id="2015333at2759"/>
<dbReference type="PRO" id="PR:Q5AHB1"/>
<dbReference type="Proteomes" id="UP000000559">
    <property type="component" value="Chromosome 2"/>
</dbReference>
<dbReference type="GO" id="GO:0030479">
    <property type="term" value="C:actin cortical patch"/>
    <property type="evidence" value="ECO:0007669"/>
    <property type="project" value="UniProtKB-SubCell"/>
</dbReference>
<dbReference type="GO" id="GO:0005737">
    <property type="term" value="C:cytoplasm"/>
    <property type="evidence" value="ECO:0000318"/>
    <property type="project" value="GO_Central"/>
</dbReference>
<dbReference type="GO" id="GO:0010008">
    <property type="term" value="C:endosome membrane"/>
    <property type="evidence" value="ECO:0007669"/>
    <property type="project" value="UniProtKB-SubCell"/>
</dbReference>
<dbReference type="GO" id="GO:0005886">
    <property type="term" value="C:plasma membrane"/>
    <property type="evidence" value="ECO:0000318"/>
    <property type="project" value="GO_Central"/>
</dbReference>
<dbReference type="GO" id="GO:0030427">
    <property type="term" value="C:site of polarized growth"/>
    <property type="evidence" value="ECO:0000314"/>
    <property type="project" value="CGD"/>
</dbReference>
<dbReference type="GO" id="GO:0003779">
    <property type="term" value="F:actin binding"/>
    <property type="evidence" value="ECO:0007669"/>
    <property type="project" value="UniProtKB-KW"/>
</dbReference>
<dbReference type="GO" id="GO:0005509">
    <property type="term" value="F:calcium ion binding"/>
    <property type="evidence" value="ECO:0007669"/>
    <property type="project" value="InterPro"/>
</dbReference>
<dbReference type="GO" id="GO:0006897">
    <property type="term" value="P:endocytosis"/>
    <property type="evidence" value="ECO:0000315"/>
    <property type="project" value="CGD"/>
</dbReference>
<dbReference type="GO" id="GO:0016197">
    <property type="term" value="P:endosomal transport"/>
    <property type="evidence" value="ECO:0000318"/>
    <property type="project" value="GO_Central"/>
</dbReference>
<dbReference type="GO" id="GO:0009826">
    <property type="term" value="P:unidimensional cell growth"/>
    <property type="evidence" value="ECO:0000315"/>
    <property type="project" value="CGD"/>
</dbReference>
<dbReference type="CDD" id="cd00052">
    <property type="entry name" value="EH"/>
    <property type="match status" value="2"/>
</dbReference>
<dbReference type="FunFam" id="1.10.238.10:FF:000349">
    <property type="entry name" value="Actin cytoskeleton-regulatory complex protein PAN1"/>
    <property type="match status" value="1"/>
</dbReference>
<dbReference type="FunFam" id="1.10.238.10:FF:000354">
    <property type="entry name" value="Actin cytoskeleton-regulatory complex protein pan1"/>
    <property type="match status" value="1"/>
</dbReference>
<dbReference type="Gene3D" id="1.10.238.10">
    <property type="entry name" value="EF-hand"/>
    <property type="match status" value="2"/>
</dbReference>
<dbReference type="InterPro" id="IPR013182">
    <property type="entry name" value="DUF1720"/>
</dbReference>
<dbReference type="InterPro" id="IPR011992">
    <property type="entry name" value="EF-hand-dom_pair"/>
</dbReference>
<dbReference type="InterPro" id="IPR002048">
    <property type="entry name" value="EF_hand_dom"/>
</dbReference>
<dbReference type="InterPro" id="IPR000261">
    <property type="entry name" value="EH_dom"/>
</dbReference>
<dbReference type="InterPro" id="IPR003124">
    <property type="entry name" value="WH2_dom"/>
</dbReference>
<dbReference type="PANTHER" id="PTHR11216:SF170">
    <property type="entry name" value="DYNAMIN ASSOCIATED PROTEIN 160, ISOFORM D"/>
    <property type="match status" value="1"/>
</dbReference>
<dbReference type="PANTHER" id="PTHR11216">
    <property type="entry name" value="EH DOMAIN"/>
    <property type="match status" value="1"/>
</dbReference>
<dbReference type="Pfam" id="PF08226">
    <property type="entry name" value="DUF1720"/>
    <property type="match status" value="2"/>
</dbReference>
<dbReference type="Pfam" id="PF12763">
    <property type="entry name" value="EH"/>
    <property type="match status" value="2"/>
</dbReference>
<dbReference type="SMART" id="SM00054">
    <property type="entry name" value="EFh"/>
    <property type="match status" value="2"/>
</dbReference>
<dbReference type="SMART" id="SM00027">
    <property type="entry name" value="EH"/>
    <property type="match status" value="2"/>
</dbReference>
<dbReference type="SUPFAM" id="SSF47473">
    <property type="entry name" value="EF-hand"/>
    <property type="match status" value="2"/>
</dbReference>
<dbReference type="PROSITE" id="PS50222">
    <property type="entry name" value="EF_HAND_2"/>
    <property type="match status" value="2"/>
</dbReference>
<dbReference type="PROSITE" id="PS50031">
    <property type="entry name" value="EH"/>
    <property type="match status" value="2"/>
</dbReference>
<dbReference type="PROSITE" id="PS51082">
    <property type="entry name" value="WH2"/>
    <property type="match status" value="1"/>
</dbReference>